<dbReference type="EMBL" id="DQ443287">
    <property type="protein sequence ID" value="ABF51376.1"/>
    <property type="molecule type" value="mRNA"/>
</dbReference>
<dbReference type="EMBL" id="DQ868530">
    <property type="protein sequence ID" value="ABK42006.1"/>
    <property type="molecule type" value="mRNA"/>
</dbReference>
<dbReference type="RefSeq" id="NP_001040528.1">
    <property type="nucleotide sequence ID" value="NM_001047063.1"/>
</dbReference>
<dbReference type="SMR" id="A3QVV1"/>
<dbReference type="FunCoup" id="A3QVV1">
    <property type="interactions" value="1844"/>
</dbReference>
<dbReference type="STRING" id="7091.A3QVV1"/>
<dbReference type="MEROPS" id="M67.974"/>
<dbReference type="PaxDb" id="7091-BGIBMGA008209-TA"/>
<dbReference type="GeneID" id="733116"/>
<dbReference type="KEGG" id="bmor:733116"/>
<dbReference type="CTD" id="40587"/>
<dbReference type="eggNOG" id="KOG2975">
    <property type="taxonomic scope" value="Eukaryota"/>
</dbReference>
<dbReference type="HOGENOM" id="CLU_027018_0_1_1"/>
<dbReference type="InParanoid" id="A3QVV1"/>
<dbReference type="OrthoDB" id="522981at7088"/>
<dbReference type="Proteomes" id="UP000005204">
    <property type="component" value="Unassembled WGS sequence"/>
</dbReference>
<dbReference type="GO" id="GO:0016282">
    <property type="term" value="C:eukaryotic 43S preinitiation complex"/>
    <property type="evidence" value="ECO:0007669"/>
    <property type="project" value="UniProtKB-UniRule"/>
</dbReference>
<dbReference type="GO" id="GO:0033290">
    <property type="term" value="C:eukaryotic 48S preinitiation complex"/>
    <property type="evidence" value="ECO:0007669"/>
    <property type="project" value="UniProtKB-UniRule"/>
</dbReference>
<dbReference type="GO" id="GO:0071541">
    <property type="term" value="C:eukaryotic translation initiation factor 3 complex, eIF3m"/>
    <property type="evidence" value="ECO:0007669"/>
    <property type="project" value="TreeGrafter"/>
</dbReference>
<dbReference type="GO" id="GO:0008237">
    <property type="term" value="F:metallopeptidase activity"/>
    <property type="evidence" value="ECO:0007669"/>
    <property type="project" value="InterPro"/>
</dbReference>
<dbReference type="GO" id="GO:0003743">
    <property type="term" value="F:translation initiation factor activity"/>
    <property type="evidence" value="ECO:0007669"/>
    <property type="project" value="UniProtKB-UniRule"/>
</dbReference>
<dbReference type="GO" id="GO:0031369">
    <property type="term" value="F:translation initiation factor binding"/>
    <property type="evidence" value="ECO:0007669"/>
    <property type="project" value="InterPro"/>
</dbReference>
<dbReference type="GO" id="GO:0001732">
    <property type="term" value="P:formation of cytoplasmic translation initiation complex"/>
    <property type="evidence" value="ECO:0007669"/>
    <property type="project" value="UniProtKB-UniRule"/>
</dbReference>
<dbReference type="CDD" id="cd08064">
    <property type="entry name" value="MPN_eIF3f"/>
    <property type="match status" value="1"/>
</dbReference>
<dbReference type="FunFam" id="3.40.140.10:FF:000014">
    <property type="entry name" value="Eukaryotic translation initiation factor 3 subunit F"/>
    <property type="match status" value="1"/>
</dbReference>
<dbReference type="Gene3D" id="3.40.140.10">
    <property type="entry name" value="Cytidine Deaminase, domain 2"/>
    <property type="match status" value="1"/>
</dbReference>
<dbReference type="HAMAP" id="MF_03005">
    <property type="entry name" value="eIF3f"/>
    <property type="match status" value="1"/>
</dbReference>
<dbReference type="InterPro" id="IPR027531">
    <property type="entry name" value="eIF3f"/>
</dbReference>
<dbReference type="InterPro" id="IPR024969">
    <property type="entry name" value="EIF3F/CSN6-like_C"/>
</dbReference>
<dbReference type="InterPro" id="IPR000555">
    <property type="entry name" value="JAMM/MPN+_dom"/>
</dbReference>
<dbReference type="InterPro" id="IPR037518">
    <property type="entry name" value="MPN"/>
</dbReference>
<dbReference type="PANTHER" id="PTHR10540:SF6">
    <property type="entry name" value="EUKARYOTIC TRANSLATION INITIATION FACTOR 3 SUBUNIT F"/>
    <property type="match status" value="1"/>
</dbReference>
<dbReference type="PANTHER" id="PTHR10540">
    <property type="entry name" value="EUKARYOTIC TRANSLATION INITIATION FACTOR 3 SUBUNIT F-RELATED"/>
    <property type="match status" value="1"/>
</dbReference>
<dbReference type="Pfam" id="PF01398">
    <property type="entry name" value="JAB"/>
    <property type="match status" value="1"/>
</dbReference>
<dbReference type="Pfam" id="PF13012">
    <property type="entry name" value="MitMem_reg"/>
    <property type="match status" value="1"/>
</dbReference>
<dbReference type="SMART" id="SM00232">
    <property type="entry name" value="JAB_MPN"/>
    <property type="match status" value="1"/>
</dbReference>
<dbReference type="PROSITE" id="PS50249">
    <property type="entry name" value="MPN"/>
    <property type="match status" value="1"/>
</dbReference>
<keyword id="KW-0963">Cytoplasm</keyword>
<keyword id="KW-0396">Initiation factor</keyword>
<keyword id="KW-0648">Protein biosynthesis</keyword>
<keyword id="KW-1185">Reference proteome</keyword>
<reference key="1">
    <citation type="submission" date="2006-07" db="EMBL/GenBank/DDBJ databases">
        <title>Identification and characterization of eukaryotic translation initiation factor 3 subunit 5 epsilon-like of silkworm, Bombyx mori.</title>
        <authorList>
            <person name="Xu Y.S."/>
        </authorList>
    </citation>
    <scope>NUCLEOTIDE SEQUENCE [MRNA]</scope>
</reference>
<reference key="2">
    <citation type="submission" date="2005-11" db="EMBL/GenBank/DDBJ databases">
        <title>Blast silkworm EST database for functional genes.</title>
        <authorList>
            <person name="Niu B.L."/>
            <person name="Meng Z.Q."/>
            <person name="Weng H.B."/>
            <person name="Shen W.F."/>
            <person name="He L.H."/>
            <person name="Zheng K.F."/>
            <person name="Ye S.T."/>
            <person name="Lin T.B."/>
            <person name="Chen J.E."/>
        </authorList>
    </citation>
    <scope>NUCLEOTIDE SEQUENCE [LARGE SCALE MRNA]</scope>
</reference>
<evidence type="ECO:0000255" key="1">
    <source>
        <dbReference type="HAMAP-Rule" id="MF_03005"/>
    </source>
</evidence>
<evidence type="ECO:0000255" key="2">
    <source>
        <dbReference type="PROSITE-ProRule" id="PRU01182"/>
    </source>
</evidence>
<name>EIF3F_BOMMO</name>
<gene>
    <name evidence="1" type="primary">eIF3-S5</name>
</gene>
<protein>
    <recommendedName>
        <fullName evidence="1">Eukaryotic translation initiation factor 3 subunit F</fullName>
        <shortName evidence="1">eIF3f</shortName>
    </recommendedName>
    <alternativeName>
        <fullName evidence="1">Eukaryotic translation initiation factor 3 subunit 5</fullName>
    </alternativeName>
</protein>
<comment type="function">
    <text evidence="1">Component of the eukaryotic translation initiation factor 3 (eIF-3) complex, which is involved in protein synthesis of a specialized repertoire of mRNAs and, together with other initiation factors, stimulates binding of mRNA and methionyl-tRNAi to the 40S ribosome. The eIF-3 complex specifically targets and initiates translation of a subset of mRNAs involved in cell proliferation.</text>
</comment>
<comment type="subunit">
    <text evidence="1">Component of the eukaryotic translation initiation factor 3 (eIF-3) complex.</text>
</comment>
<comment type="subcellular location">
    <subcellularLocation>
        <location evidence="1">Cytoplasm</location>
    </subcellularLocation>
</comment>
<comment type="similarity">
    <text evidence="1">Belongs to the eIF-3 subunit F family.</text>
</comment>
<feature type="chain" id="PRO_0000364295" description="Eukaryotic translation initiation factor 3 subunit F">
    <location>
        <begin position="1"/>
        <end position="289"/>
    </location>
</feature>
<feature type="domain" description="MPN" evidence="2">
    <location>
        <begin position="7"/>
        <end position="137"/>
    </location>
</feature>
<accession>A3QVV1</accession>
<accession>Q1HPW5</accession>
<organism>
    <name type="scientific">Bombyx mori</name>
    <name type="common">Silk moth</name>
    <dbReference type="NCBI Taxonomy" id="7091"/>
    <lineage>
        <taxon>Eukaryota</taxon>
        <taxon>Metazoa</taxon>
        <taxon>Ecdysozoa</taxon>
        <taxon>Arthropoda</taxon>
        <taxon>Hexapoda</taxon>
        <taxon>Insecta</taxon>
        <taxon>Pterygota</taxon>
        <taxon>Neoptera</taxon>
        <taxon>Endopterygota</taxon>
        <taxon>Lepidoptera</taxon>
        <taxon>Glossata</taxon>
        <taxon>Ditrysia</taxon>
        <taxon>Bombycoidea</taxon>
        <taxon>Bombycidae</taxon>
        <taxon>Bombycinae</taxon>
        <taxon>Bombyx</taxon>
    </lineage>
</organism>
<proteinExistence type="evidence at transcript level"/>
<sequence length="289" mass="30993">MALNISVKVHPVVLFQIVDAYERRNADSHRVIGTLWGTSDKGVVEVTNCFCVPHKEHADQVEAELNYAMDVYELNRRVNSSESIVGWWATGNEVTNHSSVIHEYYSRECREPVHVTLDTSLAGGRMGLRAYVCVPLGVPNGKQGCMFTPVDVTLTCYEPEIVGLQVCQKTVSGGGRGSSGVAAGSDLAQVMSAASSLESLLEQALQYADGAAAGAPADAEAGRALLQLAHSAPDLAKDTFSDAFASSVKDLLMVVTLAQLIKTQLQLNEKLTLLTSPVNTTIYKGRPNV</sequence>